<reference key="1">
    <citation type="journal article" date="1979" name="Fed. Proc.">
        <title>6-(D-erythro-1',2',3'-trihydroxypropyl)-7,8-dihydropterin triphosphate synthetase.</title>
        <authorList>
            <person name="Gal E.M."/>
            <person name="Sherman A.D."/>
        </authorList>
    </citation>
    <scope>PROTEIN SEQUENCE</scope>
    <source>
        <tissue>Brain</tissue>
        <tissue>Liver</tissue>
    </source>
</reference>
<proteinExistence type="evidence at protein level"/>
<protein>
    <recommendedName>
        <fullName>Erythrodihydroneopterin triphosphate synthetase</fullName>
        <ecNumber>6.-.-.-</ecNumber>
    </recommendedName>
</protein>
<sequence>ISHGFRYDAIAKLFRPFFCGDGYGHRIGETVYYAGSLKYCARSFDVGAEIICKGFYYFGIYKRRVSEV</sequence>
<organism>
    <name type="scientific">Cavia porcellus</name>
    <name type="common">Guinea pig</name>
    <dbReference type="NCBI Taxonomy" id="10141"/>
    <lineage>
        <taxon>Eukaryota</taxon>
        <taxon>Metazoa</taxon>
        <taxon>Chordata</taxon>
        <taxon>Craniata</taxon>
        <taxon>Vertebrata</taxon>
        <taxon>Euteleostomi</taxon>
        <taxon>Mammalia</taxon>
        <taxon>Eutheria</taxon>
        <taxon>Euarchontoglires</taxon>
        <taxon>Glires</taxon>
        <taxon>Rodentia</taxon>
        <taxon>Hystricomorpha</taxon>
        <taxon>Caviidae</taxon>
        <taxon>Cavia</taxon>
    </lineage>
</organism>
<keyword id="KW-0903">Direct protein sequencing</keyword>
<keyword id="KW-0436">Ligase</keyword>
<keyword id="KW-0597">Phosphoprotein</keyword>
<keyword id="KW-1185">Reference proteome</keyword>
<accession>P68312</accession>
<accession>P00972</accession>
<dbReference type="EC" id="6.-.-.-"/>
<dbReference type="PIR" id="A91463">
    <property type="entry name" value="SYGPPP"/>
</dbReference>
<dbReference type="InParanoid" id="P68312"/>
<dbReference type="Proteomes" id="UP000005447">
    <property type="component" value="Unassembled WGS sequence"/>
</dbReference>
<dbReference type="GO" id="GO:0016874">
    <property type="term" value="F:ligase activity"/>
    <property type="evidence" value="ECO:0007669"/>
    <property type="project" value="UniProtKB-KW"/>
</dbReference>
<evidence type="ECO:0000250" key="1">
    <source>
        <dbReference type="UniProtKB" id="P68313"/>
    </source>
</evidence>
<name>ERTS_CAVPO</name>
<feature type="chain" id="PRO_0000087034" description="Erythrodihydroneopterin triphosphate synthetase">
    <location>
        <begin position="1"/>
        <end position="68"/>
    </location>
</feature>
<feature type="modified residue" description="Phosphoserine" evidence="1">
    <location>
        <position position="66"/>
    </location>
</feature>